<keyword id="KW-0028">Amino-acid biosynthesis</keyword>
<keyword id="KW-0057">Aromatic amino acid biosynthesis</keyword>
<keyword id="KW-0413">Isomerase</keyword>
<keyword id="KW-0822">Tryptophan biosynthesis</keyword>
<comment type="catalytic activity">
    <reaction evidence="1">
        <text>N-(5-phospho-beta-D-ribosyl)anthranilate = 1-(2-carboxyphenylamino)-1-deoxy-D-ribulose 5-phosphate</text>
        <dbReference type="Rhea" id="RHEA:21540"/>
        <dbReference type="ChEBI" id="CHEBI:18277"/>
        <dbReference type="ChEBI" id="CHEBI:58613"/>
        <dbReference type="EC" id="5.3.1.24"/>
    </reaction>
</comment>
<comment type="pathway">
    <text evidence="1">Amino-acid biosynthesis; L-tryptophan biosynthesis; L-tryptophan from chorismate: step 3/5.</text>
</comment>
<comment type="similarity">
    <text evidence="1">Belongs to the TrpF family.</text>
</comment>
<feature type="chain" id="PRO_1000197094" description="N-(5'-phosphoribosyl)anthranilate isomerase">
    <location>
        <begin position="1"/>
        <end position="199"/>
    </location>
</feature>
<reference key="1">
    <citation type="submission" date="2005-09" db="EMBL/GenBank/DDBJ databases">
        <title>Complete genome sequence of Clostridium kluyveri and comparative genomics of Clostridia species.</title>
        <authorList>
            <person name="Inui M."/>
            <person name="Nonaka H."/>
            <person name="Shinoda Y."/>
            <person name="Ikenaga Y."/>
            <person name="Abe M."/>
            <person name="Naito K."/>
            <person name="Vertes A.A."/>
            <person name="Yukawa H."/>
        </authorList>
    </citation>
    <scope>NUCLEOTIDE SEQUENCE [LARGE SCALE GENOMIC DNA]</scope>
    <source>
        <strain>NBRC 12016</strain>
    </source>
</reference>
<gene>
    <name evidence="1" type="primary">trpF</name>
    <name type="ordered locus">CKR_1174</name>
</gene>
<dbReference type="EC" id="5.3.1.24" evidence="1"/>
<dbReference type="EMBL" id="AP009049">
    <property type="protein sequence ID" value="BAH06225.1"/>
    <property type="molecule type" value="Genomic_DNA"/>
</dbReference>
<dbReference type="RefSeq" id="WP_012101665.1">
    <property type="nucleotide sequence ID" value="NC_011837.1"/>
</dbReference>
<dbReference type="SMR" id="B9E150"/>
<dbReference type="KEGG" id="ckr:CKR_1174"/>
<dbReference type="HOGENOM" id="CLU_076364_1_0_9"/>
<dbReference type="UniPathway" id="UPA00035">
    <property type="reaction ID" value="UER00042"/>
</dbReference>
<dbReference type="Proteomes" id="UP000007969">
    <property type="component" value="Chromosome"/>
</dbReference>
<dbReference type="GO" id="GO:0004640">
    <property type="term" value="F:phosphoribosylanthranilate isomerase activity"/>
    <property type="evidence" value="ECO:0007669"/>
    <property type="project" value="UniProtKB-UniRule"/>
</dbReference>
<dbReference type="GO" id="GO:0000162">
    <property type="term" value="P:L-tryptophan biosynthetic process"/>
    <property type="evidence" value="ECO:0007669"/>
    <property type="project" value="UniProtKB-UniRule"/>
</dbReference>
<dbReference type="CDD" id="cd00405">
    <property type="entry name" value="PRAI"/>
    <property type="match status" value="1"/>
</dbReference>
<dbReference type="Gene3D" id="3.20.20.70">
    <property type="entry name" value="Aldolase class I"/>
    <property type="match status" value="1"/>
</dbReference>
<dbReference type="HAMAP" id="MF_00135">
    <property type="entry name" value="PRAI"/>
    <property type="match status" value="1"/>
</dbReference>
<dbReference type="InterPro" id="IPR013785">
    <property type="entry name" value="Aldolase_TIM"/>
</dbReference>
<dbReference type="InterPro" id="IPR001240">
    <property type="entry name" value="PRAI_dom"/>
</dbReference>
<dbReference type="InterPro" id="IPR011060">
    <property type="entry name" value="RibuloseP-bd_barrel"/>
</dbReference>
<dbReference type="InterPro" id="IPR044643">
    <property type="entry name" value="TrpF_fam"/>
</dbReference>
<dbReference type="PANTHER" id="PTHR42894">
    <property type="entry name" value="N-(5'-PHOSPHORIBOSYL)ANTHRANILATE ISOMERASE"/>
    <property type="match status" value="1"/>
</dbReference>
<dbReference type="PANTHER" id="PTHR42894:SF1">
    <property type="entry name" value="N-(5'-PHOSPHORIBOSYL)ANTHRANILATE ISOMERASE"/>
    <property type="match status" value="1"/>
</dbReference>
<dbReference type="Pfam" id="PF00697">
    <property type="entry name" value="PRAI"/>
    <property type="match status" value="1"/>
</dbReference>
<dbReference type="SUPFAM" id="SSF51366">
    <property type="entry name" value="Ribulose-phoshate binding barrel"/>
    <property type="match status" value="1"/>
</dbReference>
<accession>B9E150</accession>
<proteinExistence type="inferred from homology"/>
<protein>
    <recommendedName>
        <fullName evidence="1">N-(5'-phosphoribosyl)anthranilate isomerase</fullName>
        <shortName evidence="1">PRAI</shortName>
        <ecNumber evidence="1">5.3.1.24</ecNumber>
    </recommendedName>
</protein>
<organism>
    <name type="scientific">Clostridium kluyveri (strain NBRC 12016)</name>
    <dbReference type="NCBI Taxonomy" id="583346"/>
    <lineage>
        <taxon>Bacteria</taxon>
        <taxon>Bacillati</taxon>
        <taxon>Bacillota</taxon>
        <taxon>Clostridia</taxon>
        <taxon>Eubacteriales</taxon>
        <taxon>Clostridiaceae</taxon>
        <taxon>Clostridium</taxon>
    </lineage>
</organism>
<name>TRPF_CLOK1</name>
<sequence length="199" mass="22798">MIKVKICGLKRDEDIKCVNRYKPDYVGFVFSKSKRQVNLEQAKMLIANLDSSIKSVGVFVDEALEYVYNTSKILALDVIQFHGLEDEEYMRHFNEFTIWKALKVRCREDILNLNYKYADGIVLDNKTAGSGKCFDWDIARHIKIKKDLILAGGINEENVETAAYIVNPDIVDVSSGVESQGYKDSSKIKMFIEKVRNIK</sequence>
<evidence type="ECO:0000255" key="1">
    <source>
        <dbReference type="HAMAP-Rule" id="MF_00135"/>
    </source>
</evidence>